<name>FEN11_PHYPA</name>
<reference key="1">
    <citation type="journal article" date="2008" name="Science">
        <title>The Physcomitrella genome reveals evolutionary insights into the conquest of land by plants.</title>
        <authorList>
            <person name="Rensing S.A."/>
            <person name="Lang D."/>
            <person name="Zimmer A.D."/>
            <person name="Terry A."/>
            <person name="Salamov A."/>
            <person name="Shapiro H."/>
            <person name="Nishiyama T."/>
            <person name="Perroud P.-F."/>
            <person name="Lindquist E.A."/>
            <person name="Kamisugi Y."/>
            <person name="Tanahashi T."/>
            <person name="Sakakibara K."/>
            <person name="Fujita T."/>
            <person name="Oishi K."/>
            <person name="Shin-I T."/>
            <person name="Kuroki Y."/>
            <person name="Toyoda A."/>
            <person name="Suzuki Y."/>
            <person name="Hashimoto S.-I."/>
            <person name="Yamaguchi K."/>
            <person name="Sugano S."/>
            <person name="Kohara Y."/>
            <person name="Fujiyama A."/>
            <person name="Anterola A."/>
            <person name="Aoki S."/>
            <person name="Ashton N."/>
            <person name="Barbazuk W.B."/>
            <person name="Barker E."/>
            <person name="Bennetzen J.L."/>
            <person name="Blankenship R."/>
            <person name="Cho S.H."/>
            <person name="Dutcher S.K."/>
            <person name="Estelle M."/>
            <person name="Fawcett J.A."/>
            <person name="Gundlach H."/>
            <person name="Hanada K."/>
            <person name="Heyl A."/>
            <person name="Hicks K.A."/>
            <person name="Hughes J."/>
            <person name="Lohr M."/>
            <person name="Mayer K."/>
            <person name="Melkozernov A."/>
            <person name="Murata T."/>
            <person name="Nelson D.R."/>
            <person name="Pils B."/>
            <person name="Prigge M."/>
            <person name="Reiss B."/>
            <person name="Renner T."/>
            <person name="Rombauts S."/>
            <person name="Rushton P.J."/>
            <person name="Sanderfoot A."/>
            <person name="Schween G."/>
            <person name="Shiu S.-H."/>
            <person name="Stueber K."/>
            <person name="Theodoulou F.L."/>
            <person name="Tu H."/>
            <person name="Van de Peer Y."/>
            <person name="Verrier P.J."/>
            <person name="Waters E."/>
            <person name="Wood A."/>
            <person name="Yang L."/>
            <person name="Cove D."/>
            <person name="Cuming A.C."/>
            <person name="Hasebe M."/>
            <person name="Lucas S."/>
            <person name="Mishler B.D."/>
            <person name="Reski R."/>
            <person name="Grigoriev I.V."/>
            <person name="Quatrano R.S."/>
            <person name="Boore J.L."/>
        </authorList>
    </citation>
    <scope>NUCLEOTIDE SEQUENCE [LARGE SCALE GENOMIC DNA]</scope>
    <source>
        <strain>cv. Gransden 2004</strain>
    </source>
</reference>
<comment type="function">
    <text evidence="1">Structure-specific nuclease with 5'-flap endonuclease and 5'-3' exonuclease activities involved in DNA replication and repair. During DNA replication, cleaves the 5'-overhanging flap structure that is generated by displacement synthesis when DNA polymerase encounters the 5'-end of a downstream Okazaki fragment. It enters the flap from the 5'-end and then tracks to cleave the flap base, leaving a nick for ligation. Also involved in the long patch base excision repair (LP-BER) pathway, by cleaving within the apurinic/apyrimidinic (AP) site-terminated flap. Acts as a genome stabilization factor that prevents flaps from equilibrating into structures that lead to duplications and deletions. Also possesses 5'-3' exonuclease activity on nicked or gapped double-stranded DNA, and exhibits RNase H activity. Also involved in replication and repair of rDNA and in repairing mitochondrial DNA.</text>
</comment>
<comment type="cofactor">
    <cofactor evidence="1">
        <name>Mg(2+)</name>
        <dbReference type="ChEBI" id="CHEBI:18420"/>
    </cofactor>
    <text evidence="1">Binds 2 magnesium ions per subunit. They probably participate in the reaction catalyzed by the enzyme. May bind an additional third magnesium ion after substrate binding.</text>
</comment>
<comment type="subunit">
    <text evidence="1">Interacts with PCNA. Three molecules of FEN1 bind to one PCNA trimer with each molecule binding to one PCNA monomer. PCNA stimulates the nuclease activity without altering cleavage specificity.</text>
</comment>
<comment type="subcellular location">
    <subcellularLocation>
        <location evidence="1">Nucleus</location>
        <location evidence="1">Nucleolus</location>
    </subcellularLocation>
    <subcellularLocation>
        <location evidence="1">Nucleus</location>
        <location evidence="1">Nucleoplasm</location>
    </subcellularLocation>
    <subcellularLocation>
        <location evidence="1">Mitochondrion</location>
    </subcellularLocation>
    <text evidence="1">Resides mostly in the nucleoli and relocalizes to the nucleoplasm upon DNA damage.</text>
</comment>
<comment type="PTM">
    <text evidence="1">Phosphorylated. Phosphorylation upon DNA damage induces relocalization to the nuclear plasma.</text>
</comment>
<comment type="similarity">
    <text evidence="1">Belongs to the XPG/RAD2 endonuclease family. FEN1 subfamily.</text>
</comment>
<proteinExistence type="inferred from homology"/>
<accession>A9S0B8</accession>
<organism>
    <name type="scientific">Physcomitrium patens</name>
    <name type="common">Spreading-leaved earth moss</name>
    <name type="synonym">Physcomitrella patens</name>
    <dbReference type="NCBI Taxonomy" id="3218"/>
    <lineage>
        <taxon>Eukaryota</taxon>
        <taxon>Viridiplantae</taxon>
        <taxon>Streptophyta</taxon>
        <taxon>Embryophyta</taxon>
        <taxon>Bryophyta</taxon>
        <taxon>Bryophytina</taxon>
        <taxon>Bryopsida</taxon>
        <taxon>Funariidae</taxon>
        <taxon>Funariales</taxon>
        <taxon>Funariaceae</taxon>
        <taxon>Physcomitrium</taxon>
    </lineage>
</organism>
<gene>
    <name evidence="1" type="primary">FEN1-A</name>
    <name type="ORF">PHYPADRAFT_207454</name>
</gene>
<dbReference type="EC" id="3.1.-.-" evidence="1"/>
<dbReference type="EMBL" id="DS544928">
    <property type="protein sequence ID" value="EDQ75281.1"/>
    <property type="molecule type" value="Genomic_DNA"/>
</dbReference>
<dbReference type="RefSeq" id="XP_001759777.1">
    <property type="nucleotide sequence ID" value="XM_001759725.1"/>
</dbReference>
<dbReference type="SMR" id="A9S0B8"/>
<dbReference type="FunCoup" id="A9S0B8">
    <property type="interactions" value="3752"/>
</dbReference>
<dbReference type="PaxDb" id="3218-PP1S39_160V6.1"/>
<dbReference type="EnsemblPlants" id="Pp3c11_1310V3.1">
    <property type="protein sequence ID" value="Pp3c11_1310V3.1"/>
    <property type="gene ID" value="Pp3c11_1310"/>
</dbReference>
<dbReference type="EnsemblPlants" id="Pp3c11_1310V3.3">
    <property type="protein sequence ID" value="Pp3c11_1310V3.3"/>
    <property type="gene ID" value="Pp3c11_1310"/>
</dbReference>
<dbReference type="EnsemblPlants" id="Pp3c11_1310V3.4">
    <property type="protein sequence ID" value="Pp3c11_1310V3.4"/>
    <property type="gene ID" value="Pp3c11_1310"/>
</dbReference>
<dbReference type="Gramene" id="Pp3c11_1310V3.1">
    <property type="protein sequence ID" value="Pp3c11_1310V3.1"/>
    <property type="gene ID" value="Pp3c11_1310"/>
</dbReference>
<dbReference type="Gramene" id="Pp3c11_1310V3.3">
    <property type="protein sequence ID" value="Pp3c11_1310V3.3"/>
    <property type="gene ID" value="Pp3c11_1310"/>
</dbReference>
<dbReference type="Gramene" id="Pp3c11_1310V3.4">
    <property type="protein sequence ID" value="Pp3c11_1310V3.4"/>
    <property type="gene ID" value="Pp3c11_1310"/>
</dbReference>
<dbReference type="eggNOG" id="KOG2519">
    <property type="taxonomic scope" value="Eukaryota"/>
</dbReference>
<dbReference type="HOGENOM" id="CLU_032444_2_0_1"/>
<dbReference type="InParanoid" id="A9S0B8"/>
<dbReference type="OMA" id="CASLCKA"/>
<dbReference type="OrthoDB" id="1937206at2759"/>
<dbReference type="Proteomes" id="UP000006727">
    <property type="component" value="Chromosome 11"/>
</dbReference>
<dbReference type="GO" id="GO:0005739">
    <property type="term" value="C:mitochondrion"/>
    <property type="evidence" value="ECO:0007669"/>
    <property type="project" value="UniProtKB-SubCell"/>
</dbReference>
<dbReference type="GO" id="GO:0005730">
    <property type="term" value="C:nucleolus"/>
    <property type="evidence" value="ECO:0007669"/>
    <property type="project" value="UniProtKB-SubCell"/>
</dbReference>
<dbReference type="GO" id="GO:0005654">
    <property type="term" value="C:nucleoplasm"/>
    <property type="evidence" value="ECO:0007669"/>
    <property type="project" value="UniProtKB-SubCell"/>
</dbReference>
<dbReference type="GO" id="GO:0008409">
    <property type="term" value="F:5'-3' exonuclease activity"/>
    <property type="evidence" value="ECO:0000318"/>
    <property type="project" value="GO_Central"/>
</dbReference>
<dbReference type="GO" id="GO:0017108">
    <property type="term" value="F:5'-flap endonuclease activity"/>
    <property type="evidence" value="ECO:0000318"/>
    <property type="project" value="GO_Central"/>
</dbReference>
<dbReference type="GO" id="GO:0003677">
    <property type="term" value="F:DNA binding"/>
    <property type="evidence" value="ECO:0007669"/>
    <property type="project" value="UniProtKB-UniRule"/>
</dbReference>
<dbReference type="GO" id="GO:0000287">
    <property type="term" value="F:magnesium ion binding"/>
    <property type="evidence" value="ECO:0007669"/>
    <property type="project" value="UniProtKB-UniRule"/>
</dbReference>
<dbReference type="GO" id="GO:0006284">
    <property type="term" value="P:base-excision repair"/>
    <property type="evidence" value="ECO:0007669"/>
    <property type="project" value="UniProtKB-UniRule"/>
</dbReference>
<dbReference type="GO" id="GO:0043137">
    <property type="term" value="P:DNA replication, removal of RNA primer"/>
    <property type="evidence" value="ECO:0007669"/>
    <property type="project" value="UniProtKB-UniRule"/>
</dbReference>
<dbReference type="CDD" id="cd09907">
    <property type="entry name" value="H3TH_FEN1-Euk"/>
    <property type="match status" value="1"/>
</dbReference>
<dbReference type="CDD" id="cd09867">
    <property type="entry name" value="PIN_FEN1"/>
    <property type="match status" value="1"/>
</dbReference>
<dbReference type="FunFam" id="1.10.150.20:FF:000009">
    <property type="entry name" value="Flap endonuclease 1"/>
    <property type="match status" value="1"/>
</dbReference>
<dbReference type="FunFam" id="3.40.50.1010:FF:000015">
    <property type="entry name" value="Flap endonuclease 1"/>
    <property type="match status" value="1"/>
</dbReference>
<dbReference type="Gene3D" id="1.10.150.20">
    <property type="entry name" value="5' to 3' exonuclease, C-terminal subdomain"/>
    <property type="match status" value="1"/>
</dbReference>
<dbReference type="Gene3D" id="3.40.50.1010">
    <property type="entry name" value="5'-nuclease"/>
    <property type="match status" value="1"/>
</dbReference>
<dbReference type="HAMAP" id="MF_00614">
    <property type="entry name" value="Fen"/>
    <property type="match status" value="1"/>
</dbReference>
<dbReference type="InterPro" id="IPR002421">
    <property type="entry name" value="5-3_exonuclease"/>
</dbReference>
<dbReference type="InterPro" id="IPR036279">
    <property type="entry name" value="5-3_exonuclease_C_sf"/>
</dbReference>
<dbReference type="InterPro" id="IPR023426">
    <property type="entry name" value="Flap_endonuc"/>
</dbReference>
<dbReference type="InterPro" id="IPR008918">
    <property type="entry name" value="HhH2"/>
</dbReference>
<dbReference type="InterPro" id="IPR029060">
    <property type="entry name" value="PIN-like_dom_sf"/>
</dbReference>
<dbReference type="InterPro" id="IPR006086">
    <property type="entry name" value="XPG-I_dom"/>
</dbReference>
<dbReference type="InterPro" id="IPR006084">
    <property type="entry name" value="XPG/Rad2"/>
</dbReference>
<dbReference type="InterPro" id="IPR019974">
    <property type="entry name" value="XPG_CS"/>
</dbReference>
<dbReference type="InterPro" id="IPR006085">
    <property type="entry name" value="XPG_DNA_repair_N"/>
</dbReference>
<dbReference type="PANTHER" id="PTHR11081:SF9">
    <property type="entry name" value="FLAP ENDONUCLEASE 1"/>
    <property type="match status" value="1"/>
</dbReference>
<dbReference type="PANTHER" id="PTHR11081">
    <property type="entry name" value="FLAP ENDONUCLEASE FAMILY MEMBER"/>
    <property type="match status" value="1"/>
</dbReference>
<dbReference type="Pfam" id="PF00867">
    <property type="entry name" value="XPG_I"/>
    <property type="match status" value="1"/>
</dbReference>
<dbReference type="Pfam" id="PF00752">
    <property type="entry name" value="XPG_N"/>
    <property type="match status" value="1"/>
</dbReference>
<dbReference type="PRINTS" id="PR00853">
    <property type="entry name" value="XPGRADSUPER"/>
</dbReference>
<dbReference type="SMART" id="SM00475">
    <property type="entry name" value="53EXOc"/>
    <property type="match status" value="1"/>
</dbReference>
<dbReference type="SMART" id="SM00279">
    <property type="entry name" value="HhH2"/>
    <property type="match status" value="1"/>
</dbReference>
<dbReference type="SMART" id="SM00484">
    <property type="entry name" value="XPGI"/>
    <property type="match status" value="1"/>
</dbReference>
<dbReference type="SMART" id="SM00485">
    <property type="entry name" value="XPGN"/>
    <property type="match status" value="1"/>
</dbReference>
<dbReference type="SUPFAM" id="SSF47807">
    <property type="entry name" value="5' to 3' exonuclease, C-terminal subdomain"/>
    <property type="match status" value="1"/>
</dbReference>
<dbReference type="SUPFAM" id="SSF88723">
    <property type="entry name" value="PIN domain-like"/>
    <property type="match status" value="1"/>
</dbReference>
<dbReference type="PROSITE" id="PS00841">
    <property type="entry name" value="XPG_1"/>
    <property type="match status" value="1"/>
</dbReference>
<dbReference type="PROSITE" id="PS00842">
    <property type="entry name" value="XPG_2"/>
    <property type="match status" value="1"/>
</dbReference>
<evidence type="ECO:0000255" key="1">
    <source>
        <dbReference type="HAMAP-Rule" id="MF_03140"/>
    </source>
</evidence>
<evidence type="ECO:0000256" key="2">
    <source>
        <dbReference type="SAM" id="MobiDB-lite"/>
    </source>
</evidence>
<feature type="chain" id="PRO_0000403526" description="Flap endonuclease 1-A">
    <location>
        <begin position="1"/>
        <end position="394"/>
    </location>
</feature>
<feature type="region of interest" description="N-domain">
    <location>
        <begin position="1"/>
        <end position="105"/>
    </location>
</feature>
<feature type="region of interest" description="I-domain">
    <location>
        <begin position="123"/>
        <end position="254"/>
    </location>
</feature>
<feature type="region of interest" description="Interaction with PCNA" evidence="1">
    <location>
        <begin position="338"/>
        <end position="346"/>
    </location>
</feature>
<feature type="region of interest" description="Disordered" evidence="2">
    <location>
        <begin position="343"/>
        <end position="394"/>
    </location>
</feature>
<feature type="compositionally biased region" description="Low complexity" evidence="2">
    <location>
        <begin position="368"/>
        <end position="381"/>
    </location>
</feature>
<feature type="compositionally biased region" description="Basic residues" evidence="2">
    <location>
        <begin position="382"/>
        <end position="394"/>
    </location>
</feature>
<feature type="binding site" evidence="1">
    <location>
        <position position="34"/>
    </location>
    <ligand>
        <name>Mg(2+)</name>
        <dbReference type="ChEBI" id="CHEBI:18420"/>
        <label>1</label>
    </ligand>
</feature>
<feature type="binding site" evidence="1">
    <location>
        <position position="71"/>
    </location>
    <ligand>
        <name>DNA</name>
        <dbReference type="ChEBI" id="CHEBI:16991"/>
    </ligand>
</feature>
<feature type="binding site" evidence="1">
    <location>
        <position position="87"/>
    </location>
    <ligand>
        <name>Mg(2+)</name>
        <dbReference type="ChEBI" id="CHEBI:18420"/>
        <label>1</label>
    </ligand>
</feature>
<feature type="binding site" evidence="1">
    <location>
        <position position="159"/>
    </location>
    <ligand>
        <name>DNA</name>
        <dbReference type="ChEBI" id="CHEBI:16991"/>
    </ligand>
</feature>
<feature type="binding site" evidence="1">
    <location>
        <position position="159"/>
    </location>
    <ligand>
        <name>Mg(2+)</name>
        <dbReference type="ChEBI" id="CHEBI:18420"/>
        <label>1</label>
    </ligand>
</feature>
<feature type="binding site" evidence="1">
    <location>
        <position position="161"/>
    </location>
    <ligand>
        <name>Mg(2+)</name>
        <dbReference type="ChEBI" id="CHEBI:18420"/>
        <label>1</label>
    </ligand>
</feature>
<feature type="binding site" evidence="1">
    <location>
        <position position="180"/>
    </location>
    <ligand>
        <name>Mg(2+)</name>
        <dbReference type="ChEBI" id="CHEBI:18420"/>
        <label>2</label>
    </ligand>
</feature>
<feature type="binding site" evidence="1">
    <location>
        <position position="182"/>
    </location>
    <ligand>
        <name>Mg(2+)</name>
        <dbReference type="ChEBI" id="CHEBI:18420"/>
        <label>2</label>
    </ligand>
</feature>
<feature type="binding site" evidence="1">
    <location>
        <position position="232"/>
    </location>
    <ligand>
        <name>DNA</name>
        <dbReference type="ChEBI" id="CHEBI:16991"/>
    </ligand>
</feature>
<feature type="binding site" evidence="1">
    <location>
        <position position="234"/>
    </location>
    <ligand>
        <name>DNA</name>
        <dbReference type="ChEBI" id="CHEBI:16991"/>
    </ligand>
</feature>
<feature type="binding site" evidence="1">
    <location>
        <position position="234"/>
    </location>
    <ligand>
        <name>Mg(2+)</name>
        <dbReference type="ChEBI" id="CHEBI:18420"/>
        <label>2</label>
    </ligand>
</feature>
<protein>
    <recommendedName>
        <fullName evidence="1">Flap endonuclease 1-A</fullName>
        <shortName evidence="1">FEN-1-A</shortName>
        <ecNumber evidence="1">3.1.-.-</ecNumber>
    </recommendedName>
    <alternativeName>
        <fullName evidence="1">Flap structure-specific endonuclease 1-A</fullName>
    </alternativeName>
</protein>
<keyword id="KW-0227">DNA damage</keyword>
<keyword id="KW-0234">DNA repair</keyword>
<keyword id="KW-0235">DNA replication</keyword>
<keyword id="KW-0255">Endonuclease</keyword>
<keyword id="KW-0269">Exonuclease</keyword>
<keyword id="KW-0378">Hydrolase</keyword>
<keyword id="KW-0460">Magnesium</keyword>
<keyword id="KW-0479">Metal-binding</keyword>
<keyword id="KW-0496">Mitochondrion</keyword>
<keyword id="KW-0540">Nuclease</keyword>
<keyword id="KW-0539">Nucleus</keyword>
<keyword id="KW-0597">Phosphoprotein</keyword>
<keyword id="KW-1185">Reference proteome</keyword>
<sequence>MGIKGLTKLIADNAHGAVKEQKFENYFGRKIAIDASMSIYQFLIVVGRSGSELLTNDAGEVTSHLQGMFNRTIRVLEAGLKPVYVFDGQPPDLKKRELAKRFARREDAAEDLVTAKETGNEADVEKYSKKTVKVTKQHNEDCRKLLRLMGVPVVEAPSEAEAECASLCKAEKVFAVASEDMDSLTYGSTRFLRHLMEPTSRKLPVLEFDIAKVLEGLGLNMDQFVDLCILCGCDYCDTIRGIGPQTALKMIRQHGSLEIVLENLNKDRYQVPDPWPYQEARRLFKEPLVTPPEKVPEFKWTAPDTEGLRQLLVEENGFNNDRVMKAIEKLKVAKNKASQGRLESFFGVSSSSSNKRKEAPDSEASAGKQVKTAAAVKPAKAASKKGPAKGGKKK</sequence>